<feature type="chain" id="PRO_1000165588" description="Anaerobic nitric oxide reductase transcription regulator NorR">
    <location>
        <begin position="1"/>
        <end position="504"/>
    </location>
</feature>
<feature type="domain" description="Sigma-54 factor interaction" evidence="1">
    <location>
        <begin position="187"/>
        <end position="416"/>
    </location>
</feature>
<feature type="DNA-binding region" description="H-T-H motif" evidence="1">
    <location>
        <begin position="479"/>
        <end position="498"/>
    </location>
</feature>
<feature type="binding site" evidence="1">
    <location>
        <begin position="215"/>
        <end position="222"/>
    </location>
    <ligand>
        <name>ATP</name>
        <dbReference type="ChEBI" id="CHEBI:30616"/>
    </ligand>
</feature>
<feature type="binding site" evidence="1">
    <location>
        <begin position="278"/>
        <end position="287"/>
    </location>
    <ligand>
        <name>ATP</name>
        <dbReference type="ChEBI" id="CHEBI:30616"/>
    </ligand>
</feature>
<feature type="modified residue" description="4-aspartylphosphate" evidence="1">
    <location>
        <position position="57"/>
    </location>
</feature>
<evidence type="ECO:0000255" key="1">
    <source>
        <dbReference type="HAMAP-Rule" id="MF_01314"/>
    </source>
</evidence>
<accession>B7LEC0</accession>
<name>NORR_ECO55</name>
<proteinExistence type="inferred from homology"/>
<protein>
    <recommendedName>
        <fullName evidence="1">Anaerobic nitric oxide reductase transcription regulator NorR</fullName>
    </recommendedName>
</protein>
<dbReference type="EMBL" id="CU928145">
    <property type="protein sequence ID" value="CAU98857.1"/>
    <property type="molecule type" value="Genomic_DNA"/>
</dbReference>
<dbReference type="RefSeq" id="WP_000010775.1">
    <property type="nucleotide sequence ID" value="NC_011748.1"/>
</dbReference>
<dbReference type="SMR" id="B7LEC0"/>
<dbReference type="KEGG" id="eck:EC55989_2971"/>
<dbReference type="HOGENOM" id="CLU_000445_125_0_6"/>
<dbReference type="UniPathway" id="UPA00638"/>
<dbReference type="Proteomes" id="UP000000746">
    <property type="component" value="Chromosome"/>
</dbReference>
<dbReference type="GO" id="GO:0005524">
    <property type="term" value="F:ATP binding"/>
    <property type="evidence" value="ECO:0007669"/>
    <property type="project" value="UniProtKB-UniRule"/>
</dbReference>
<dbReference type="GO" id="GO:0016887">
    <property type="term" value="F:ATP hydrolysis activity"/>
    <property type="evidence" value="ECO:0007669"/>
    <property type="project" value="InterPro"/>
</dbReference>
<dbReference type="GO" id="GO:0003677">
    <property type="term" value="F:DNA binding"/>
    <property type="evidence" value="ECO:0007669"/>
    <property type="project" value="UniProtKB-KW"/>
</dbReference>
<dbReference type="GO" id="GO:0003700">
    <property type="term" value="F:DNA-binding transcription factor activity"/>
    <property type="evidence" value="ECO:0007669"/>
    <property type="project" value="UniProtKB-UniRule"/>
</dbReference>
<dbReference type="GO" id="GO:0000160">
    <property type="term" value="P:phosphorelay signal transduction system"/>
    <property type="evidence" value="ECO:0007669"/>
    <property type="project" value="UniProtKB-UniRule"/>
</dbReference>
<dbReference type="CDD" id="cd00009">
    <property type="entry name" value="AAA"/>
    <property type="match status" value="1"/>
</dbReference>
<dbReference type="FunFam" id="1.10.10.60:FF:000188">
    <property type="entry name" value="Anaerobic nitric oxide reductase transcription regulator NorR"/>
    <property type="match status" value="1"/>
</dbReference>
<dbReference type="FunFam" id="1.10.8.60:FF:000045">
    <property type="entry name" value="Anaerobic nitric oxide reductase transcription regulator NorR"/>
    <property type="match status" value="1"/>
</dbReference>
<dbReference type="FunFam" id="3.30.450.40:FF:000021">
    <property type="entry name" value="Anaerobic nitric oxide reductase transcription regulator NorR"/>
    <property type="match status" value="1"/>
</dbReference>
<dbReference type="FunFam" id="3.40.50.300:FF:000006">
    <property type="entry name" value="DNA-binding transcriptional regulator NtrC"/>
    <property type="match status" value="1"/>
</dbReference>
<dbReference type="Gene3D" id="1.10.8.60">
    <property type="match status" value="1"/>
</dbReference>
<dbReference type="Gene3D" id="3.30.450.40">
    <property type="match status" value="1"/>
</dbReference>
<dbReference type="Gene3D" id="1.10.10.60">
    <property type="entry name" value="Homeodomain-like"/>
    <property type="match status" value="1"/>
</dbReference>
<dbReference type="Gene3D" id="3.40.50.300">
    <property type="entry name" value="P-loop containing nucleotide triphosphate hydrolases"/>
    <property type="match status" value="1"/>
</dbReference>
<dbReference type="HAMAP" id="MF_01314">
    <property type="entry name" value="NorR"/>
    <property type="match status" value="1"/>
</dbReference>
<dbReference type="InterPro" id="IPR003593">
    <property type="entry name" value="AAA+_ATPase"/>
</dbReference>
<dbReference type="InterPro" id="IPR003018">
    <property type="entry name" value="GAF"/>
</dbReference>
<dbReference type="InterPro" id="IPR029016">
    <property type="entry name" value="GAF-like_dom_sf"/>
</dbReference>
<dbReference type="InterPro" id="IPR009057">
    <property type="entry name" value="Homeodomain-like_sf"/>
</dbReference>
<dbReference type="InterPro" id="IPR023944">
    <property type="entry name" value="NorR"/>
</dbReference>
<dbReference type="InterPro" id="IPR027417">
    <property type="entry name" value="P-loop_NTPase"/>
</dbReference>
<dbReference type="InterPro" id="IPR002078">
    <property type="entry name" value="Sigma_54_int"/>
</dbReference>
<dbReference type="InterPro" id="IPR025662">
    <property type="entry name" value="Sigma_54_int_dom_ATP-bd_1"/>
</dbReference>
<dbReference type="InterPro" id="IPR025943">
    <property type="entry name" value="Sigma_54_int_dom_ATP-bd_2"/>
</dbReference>
<dbReference type="InterPro" id="IPR025944">
    <property type="entry name" value="Sigma_54_int_dom_CS"/>
</dbReference>
<dbReference type="NCBIfam" id="NF003451">
    <property type="entry name" value="PRK05022.1"/>
    <property type="match status" value="1"/>
</dbReference>
<dbReference type="PANTHER" id="PTHR32071:SF35">
    <property type="entry name" value="ANAEROBIC NITRIC OXIDE REDUCTASE TRANSCRIPTION REGULATOR NORR"/>
    <property type="match status" value="1"/>
</dbReference>
<dbReference type="PANTHER" id="PTHR32071">
    <property type="entry name" value="TRANSCRIPTIONAL REGULATORY PROTEIN"/>
    <property type="match status" value="1"/>
</dbReference>
<dbReference type="Pfam" id="PF01590">
    <property type="entry name" value="GAF"/>
    <property type="match status" value="1"/>
</dbReference>
<dbReference type="Pfam" id="PF00158">
    <property type="entry name" value="Sigma54_activat"/>
    <property type="match status" value="1"/>
</dbReference>
<dbReference type="SMART" id="SM00382">
    <property type="entry name" value="AAA"/>
    <property type="match status" value="1"/>
</dbReference>
<dbReference type="SMART" id="SM00065">
    <property type="entry name" value="GAF"/>
    <property type="match status" value="1"/>
</dbReference>
<dbReference type="SUPFAM" id="SSF55781">
    <property type="entry name" value="GAF domain-like"/>
    <property type="match status" value="1"/>
</dbReference>
<dbReference type="SUPFAM" id="SSF46689">
    <property type="entry name" value="Homeodomain-like"/>
    <property type="match status" value="1"/>
</dbReference>
<dbReference type="SUPFAM" id="SSF52540">
    <property type="entry name" value="P-loop containing nucleoside triphosphate hydrolases"/>
    <property type="match status" value="1"/>
</dbReference>
<dbReference type="PROSITE" id="PS00675">
    <property type="entry name" value="SIGMA54_INTERACT_1"/>
    <property type="match status" value="1"/>
</dbReference>
<dbReference type="PROSITE" id="PS00676">
    <property type="entry name" value="SIGMA54_INTERACT_2"/>
    <property type="match status" value="1"/>
</dbReference>
<dbReference type="PROSITE" id="PS00688">
    <property type="entry name" value="SIGMA54_INTERACT_3"/>
    <property type="match status" value="1"/>
</dbReference>
<dbReference type="PROSITE" id="PS50045">
    <property type="entry name" value="SIGMA54_INTERACT_4"/>
    <property type="match status" value="1"/>
</dbReference>
<organism>
    <name type="scientific">Escherichia coli (strain 55989 / EAEC)</name>
    <dbReference type="NCBI Taxonomy" id="585055"/>
    <lineage>
        <taxon>Bacteria</taxon>
        <taxon>Pseudomonadati</taxon>
        <taxon>Pseudomonadota</taxon>
        <taxon>Gammaproteobacteria</taxon>
        <taxon>Enterobacterales</taxon>
        <taxon>Enterobacteriaceae</taxon>
        <taxon>Escherichia</taxon>
    </lineage>
</organism>
<reference key="1">
    <citation type="journal article" date="2009" name="PLoS Genet.">
        <title>Organised genome dynamics in the Escherichia coli species results in highly diverse adaptive paths.</title>
        <authorList>
            <person name="Touchon M."/>
            <person name="Hoede C."/>
            <person name="Tenaillon O."/>
            <person name="Barbe V."/>
            <person name="Baeriswyl S."/>
            <person name="Bidet P."/>
            <person name="Bingen E."/>
            <person name="Bonacorsi S."/>
            <person name="Bouchier C."/>
            <person name="Bouvet O."/>
            <person name="Calteau A."/>
            <person name="Chiapello H."/>
            <person name="Clermont O."/>
            <person name="Cruveiller S."/>
            <person name="Danchin A."/>
            <person name="Diard M."/>
            <person name="Dossat C."/>
            <person name="Karoui M.E."/>
            <person name="Frapy E."/>
            <person name="Garry L."/>
            <person name="Ghigo J.M."/>
            <person name="Gilles A.M."/>
            <person name="Johnson J."/>
            <person name="Le Bouguenec C."/>
            <person name="Lescat M."/>
            <person name="Mangenot S."/>
            <person name="Martinez-Jehanne V."/>
            <person name="Matic I."/>
            <person name="Nassif X."/>
            <person name="Oztas S."/>
            <person name="Petit M.A."/>
            <person name="Pichon C."/>
            <person name="Rouy Z."/>
            <person name="Ruf C.S."/>
            <person name="Schneider D."/>
            <person name="Tourret J."/>
            <person name="Vacherie B."/>
            <person name="Vallenet D."/>
            <person name="Medigue C."/>
            <person name="Rocha E.P.C."/>
            <person name="Denamur E."/>
        </authorList>
    </citation>
    <scope>NUCLEOTIDE SEQUENCE [LARGE SCALE GENOMIC DNA]</scope>
    <source>
        <strain>55989 / EAEC</strain>
    </source>
</reference>
<gene>
    <name evidence="1" type="primary">norR</name>
    <name type="ordered locus">EC55989_2971</name>
</gene>
<keyword id="KW-0067">ATP-binding</keyword>
<keyword id="KW-0238">DNA-binding</keyword>
<keyword id="KW-0547">Nucleotide-binding</keyword>
<keyword id="KW-0597">Phosphoprotein</keyword>
<keyword id="KW-1185">Reference proteome</keyword>
<keyword id="KW-0804">Transcription</keyword>
<keyword id="KW-0805">Transcription regulation</keyword>
<comment type="function">
    <text evidence="1">Required for the expression of anaerobic nitric oxide (NO) reductase, acts as a transcriptional activator for at least the norVW operon. Activation also requires sigma-54.</text>
</comment>
<comment type="pathway">
    <text evidence="1">Nitrogen metabolism; nitric oxide reduction.</text>
</comment>
<sequence length="504" mass="55321">MSFSVDVLANIAIELQRGIGHQDRFQRLITTLRQVLECDASALLRYDSRQFIPLAIDGLAKDVLGRRFALEGHPRLEAIARAGDVVRFPADSELPDPYDGLIPGQESLKVHACVGLPLFAGQNLIGALTLDGMQPDQFDVFSDEELRLIAALAAGALSNALLIEQLESQNMMPGDATPFEAVKQTQMIGLSPGMTQLKKEIEIVAASDLNVLISGETGTGKELVAKAIHEASPRAVNPLVYLNCAALPESVAESELFGHVKGAFTGAISNRSGKFEMADNGTLFLDEIGELSLALQAKLLRVLQYGDIQRVGDDRSLRVDVRVLAATNRDLREEVLAGRFRADLFHRLSVFPLSVPPLRERGDDVILLAGYFCEQCRLRLGLSRVVLSAGARNLLQHYRFPGNVRELEHAIHRAVVLSRATRNGDEVILEAQHFAFPEVTLPPPEAAAVPVVKQNLREATEAFQRETIRQALAQNHHNWAACARMLETDVANLHRLAKRLGMKD</sequence>